<comment type="function">
    <text evidence="1">Acts as a negative regulator of innate and adaptive immunity by maintaining immune homeostasis. Negative regulator of Toll-like receptor and T-cell receptor function. Prevents hyperresponsiveness of the immune system and maintains immune homeostasis. Inhibits jun/ap1 and NF-kappa-B activation. Promotes Fas-induced apoptosis (By similarity).</text>
</comment>
<comment type="domain">
    <text evidence="1">The central region was initially thought to constitute a DED (death effector) domain. However, 3D-structure data reveal a previously uncharacterized fold that is different from the predicted fold of a DED (death effector) domain. It consists of a large, hydrophobic central cavity that is poised for cofactor binding (By similarity).</text>
</comment>
<comment type="similarity">
    <text evidence="2">Belongs to the TNFAIP8 family. TNFAIP8L2 subfamily.</text>
</comment>
<gene>
    <name type="primary">tnfaip8l2a</name>
    <name type="ORF">si:dkey-24a7.9</name>
    <name type="ORF">zgc:136816</name>
</gene>
<reference key="1">
    <citation type="journal article" date="2013" name="Nature">
        <title>The zebrafish reference genome sequence and its relationship to the human genome.</title>
        <authorList>
            <person name="Howe K."/>
            <person name="Clark M.D."/>
            <person name="Torroja C.F."/>
            <person name="Torrance J."/>
            <person name="Berthelot C."/>
            <person name="Muffato M."/>
            <person name="Collins J.E."/>
            <person name="Humphray S."/>
            <person name="McLaren K."/>
            <person name="Matthews L."/>
            <person name="McLaren S."/>
            <person name="Sealy I."/>
            <person name="Caccamo M."/>
            <person name="Churcher C."/>
            <person name="Scott C."/>
            <person name="Barrett J.C."/>
            <person name="Koch R."/>
            <person name="Rauch G.J."/>
            <person name="White S."/>
            <person name="Chow W."/>
            <person name="Kilian B."/>
            <person name="Quintais L.T."/>
            <person name="Guerra-Assuncao J.A."/>
            <person name="Zhou Y."/>
            <person name="Gu Y."/>
            <person name="Yen J."/>
            <person name="Vogel J.H."/>
            <person name="Eyre T."/>
            <person name="Redmond S."/>
            <person name="Banerjee R."/>
            <person name="Chi J."/>
            <person name="Fu B."/>
            <person name="Langley E."/>
            <person name="Maguire S.F."/>
            <person name="Laird G.K."/>
            <person name="Lloyd D."/>
            <person name="Kenyon E."/>
            <person name="Donaldson S."/>
            <person name="Sehra H."/>
            <person name="Almeida-King J."/>
            <person name="Loveland J."/>
            <person name="Trevanion S."/>
            <person name="Jones M."/>
            <person name="Quail M."/>
            <person name="Willey D."/>
            <person name="Hunt A."/>
            <person name="Burton J."/>
            <person name="Sims S."/>
            <person name="McLay K."/>
            <person name="Plumb B."/>
            <person name="Davis J."/>
            <person name="Clee C."/>
            <person name="Oliver K."/>
            <person name="Clark R."/>
            <person name="Riddle C."/>
            <person name="Elliot D."/>
            <person name="Threadgold G."/>
            <person name="Harden G."/>
            <person name="Ware D."/>
            <person name="Begum S."/>
            <person name="Mortimore B."/>
            <person name="Kerry G."/>
            <person name="Heath P."/>
            <person name="Phillimore B."/>
            <person name="Tracey A."/>
            <person name="Corby N."/>
            <person name="Dunn M."/>
            <person name="Johnson C."/>
            <person name="Wood J."/>
            <person name="Clark S."/>
            <person name="Pelan S."/>
            <person name="Griffiths G."/>
            <person name="Smith M."/>
            <person name="Glithero R."/>
            <person name="Howden P."/>
            <person name="Barker N."/>
            <person name="Lloyd C."/>
            <person name="Stevens C."/>
            <person name="Harley J."/>
            <person name="Holt K."/>
            <person name="Panagiotidis G."/>
            <person name="Lovell J."/>
            <person name="Beasley H."/>
            <person name="Henderson C."/>
            <person name="Gordon D."/>
            <person name="Auger K."/>
            <person name="Wright D."/>
            <person name="Collins J."/>
            <person name="Raisen C."/>
            <person name="Dyer L."/>
            <person name="Leung K."/>
            <person name="Robertson L."/>
            <person name="Ambridge K."/>
            <person name="Leongamornlert D."/>
            <person name="McGuire S."/>
            <person name="Gilderthorp R."/>
            <person name="Griffiths C."/>
            <person name="Manthravadi D."/>
            <person name="Nichol S."/>
            <person name="Barker G."/>
            <person name="Whitehead S."/>
            <person name="Kay M."/>
            <person name="Brown J."/>
            <person name="Murnane C."/>
            <person name="Gray E."/>
            <person name="Humphries M."/>
            <person name="Sycamore N."/>
            <person name="Barker D."/>
            <person name="Saunders D."/>
            <person name="Wallis J."/>
            <person name="Babbage A."/>
            <person name="Hammond S."/>
            <person name="Mashreghi-Mohammadi M."/>
            <person name="Barr L."/>
            <person name="Martin S."/>
            <person name="Wray P."/>
            <person name="Ellington A."/>
            <person name="Matthews N."/>
            <person name="Ellwood M."/>
            <person name="Woodmansey R."/>
            <person name="Clark G."/>
            <person name="Cooper J."/>
            <person name="Tromans A."/>
            <person name="Grafham D."/>
            <person name="Skuce C."/>
            <person name="Pandian R."/>
            <person name="Andrews R."/>
            <person name="Harrison E."/>
            <person name="Kimberley A."/>
            <person name="Garnett J."/>
            <person name="Fosker N."/>
            <person name="Hall R."/>
            <person name="Garner P."/>
            <person name="Kelly D."/>
            <person name="Bird C."/>
            <person name="Palmer S."/>
            <person name="Gehring I."/>
            <person name="Berger A."/>
            <person name="Dooley C.M."/>
            <person name="Ersan-Urun Z."/>
            <person name="Eser C."/>
            <person name="Geiger H."/>
            <person name="Geisler M."/>
            <person name="Karotki L."/>
            <person name="Kirn A."/>
            <person name="Konantz J."/>
            <person name="Konantz M."/>
            <person name="Oberlander M."/>
            <person name="Rudolph-Geiger S."/>
            <person name="Teucke M."/>
            <person name="Lanz C."/>
            <person name="Raddatz G."/>
            <person name="Osoegawa K."/>
            <person name="Zhu B."/>
            <person name="Rapp A."/>
            <person name="Widaa S."/>
            <person name="Langford C."/>
            <person name="Yang F."/>
            <person name="Schuster S.C."/>
            <person name="Carter N.P."/>
            <person name="Harrow J."/>
            <person name="Ning Z."/>
            <person name="Herrero J."/>
            <person name="Searle S.M."/>
            <person name="Enright A."/>
            <person name="Geisler R."/>
            <person name="Plasterk R.H."/>
            <person name="Lee C."/>
            <person name="Westerfield M."/>
            <person name="de Jong P.J."/>
            <person name="Zon L.I."/>
            <person name="Postlethwait J.H."/>
            <person name="Nusslein-Volhard C."/>
            <person name="Hubbard T.J."/>
            <person name="Roest Crollius H."/>
            <person name="Rogers J."/>
            <person name="Stemple D.L."/>
        </authorList>
    </citation>
    <scope>NUCLEOTIDE SEQUENCE [LARGE SCALE GENOMIC DNA]</scope>
    <source>
        <strain>Tuebingen</strain>
    </source>
</reference>
<reference key="2">
    <citation type="submission" date="2006-06" db="EMBL/GenBank/DDBJ databases">
        <authorList>
            <consortium name="NIH - Zebrafish Gene Collection (ZGC) project"/>
        </authorList>
    </citation>
    <scope>NUCLEOTIDE SEQUENCE [LARGE SCALE MRNA]</scope>
</reference>
<evidence type="ECO:0000250" key="1"/>
<evidence type="ECO:0000305" key="2"/>
<proteinExistence type="evidence at transcript level"/>
<keyword id="KW-0391">Immunity</keyword>
<keyword id="KW-0399">Innate immunity</keyword>
<keyword id="KW-1185">Reference proteome</keyword>
<sequence>MEAFSSKDMAMQAQKKILSRMASKSVAQMFIDDNSSEVLDELYRVSKEHSGNRAEAQKVVKNMIKIAVKVGVLFRHEKFSAEELSIAQEFRKKLHHGAMTAISFQEVEFTFDKSVMINLLSDCRDLLLKLVEKHLTPKSLDRIRHVFNHYSNPELLTHLYDPQGNLWSNLSKICSGLNRMIEEGKL</sequence>
<organism>
    <name type="scientific">Danio rerio</name>
    <name type="common">Zebrafish</name>
    <name type="synonym">Brachydanio rerio</name>
    <dbReference type="NCBI Taxonomy" id="7955"/>
    <lineage>
        <taxon>Eukaryota</taxon>
        <taxon>Metazoa</taxon>
        <taxon>Chordata</taxon>
        <taxon>Craniata</taxon>
        <taxon>Vertebrata</taxon>
        <taxon>Euteleostomi</taxon>
        <taxon>Actinopterygii</taxon>
        <taxon>Neopterygii</taxon>
        <taxon>Teleostei</taxon>
        <taxon>Ostariophysi</taxon>
        <taxon>Cypriniformes</taxon>
        <taxon>Danionidae</taxon>
        <taxon>Danioninae</taxon>
        <taxon>Danio</taxon>
    </lineage>
</organism>
<dbReference type="EMBL" id="CU571385">
    <property type="protein sequence ID" value="CAX13646.1"/>
    <property type="molecule type" value="Genomic_DNA"/>
</dbReference>
<dbReference type="EMBL" id="BC117652">
    <property type="protein sequence ID" value="AAI17653.1"/>
    <property type="molecule type" value="mRNA"/>
</dbReference>
<dbReference type="RefSeq" id="NP_001038766.1">
    <property type="nucleotide sequence ID" value="NM_001045301.1"/>
</dbReference>
<dbReference type="SMR" id="Q1ECV8"/>
<dbReference type="FunCoup" id="Q1ECV8">
    <property type="interactions" value="48"/>
</dbReference>
<dbReference type="PaxDb" id="7955-ENSDARP00000093501"/>
<dbReference type="Ensembl" id="ENSDART00000102725">
    <property type="protein sequence ID" value="ENSDARP00000093501"/>
    <property type="gene ID" value="ENSDARG00000075592"/>
</dbReference>
<dbReference type="GeneID" id="723996"/>
<dbReference type="KEGG" id="dre:723996"/>
<dbReference type="AGR" id="ZFIN:ZDB-GENE-060616-38"/>
<dbReference type="CTD" id="723996"/>
<dbReference type="ZFIN" id="ZDB-GENE-060616-38">
    <property type="gene designation" value="tnfaip8l2a"/>
</dbReference>
<dbReference type="eggNOG" id="ENOG502QST4">
    <property type="taxonomic scope" value="Eukaryota"/>
</dbReference>
<dbReference type="HOGENOM" id="CLU_085918_1_0_1"/>
<dbReference type="InParanoid" id="Q1ECV8"/>
<dbReference type="OMA" id="GTLWPNL"/>
<dbReference type="OrthoDB" id="10055976at2759"/>
<dbReference type="PhylomeDB" id="Q1ECV8"/>
<dbReference type="TreeFam" id="TF323415"/>
<dbReference type="PRO" id="PR:Q1ECV8"/>
<dbReference type="Proteomes" id="UP000000437">
    <property type="component" value="Chromosome 19"/>
</dbReference>
<dbReference type="Bgee" id="ENSDARG00000075592">
    <property type="expression patterns" value="Expressed in granulocyte and 15 other cell types or tissues"/>
</dbReference>
<dbReference type="GO" id="GO:0005737">
    <property type="term" value="C:cytoplasm"/>
    <property type="evidence" value="ECO:0000318"/>
    <property type="project" value="GO_Central"/>
</dbReference>
<dbReference type="GO" id="GO:0045087">
    <property type="term" value="P:innate immune response"/>
    <property type="evidence" value="ECO:0007669"/>
    <property type="project" value="UniProtKB-KW"/>
</dbReference>
<dbReference type="GO" id="GO:0042981">
    <property type="term" value="P:regulation of apoptotic process"/>
    <property type="evidence" value="ECO:0007669"/>
    <property type="project" value="InterPro"/>
</dbReference>
<dbReference type="FunFam" id="1.20.1440.160:FF:000001">
    <property type="entry name" value="Tumor necrosis factor alpha-induced protein 8-like 1"/>
    <property type="match status" value="1"/>
</dbReference>
<dbReference type="Gene3D" id="1.20.1440.160">
    <property type="entry name" value="Tumor necrosis factor alpha-induced protein 8-like"/>
    <property type="match status" value="1"/>
</dbReference>
<dbReference type="InterPro" id="IPR008477">
    <property type="entry name" value="TNFAIP8-like"/>
</dbReference>
<dbReference type="InterPro" id="IPR038355">
    <property type="entry name" value="TNFAIP8_sf"/>
</dbReference>
<dbReference type="PANTHER" id="PTHR12757:SF4">
    <property type="entry name" value="TUMOR NECROSIS FACTOR ALPHA-INDUCED PROTEIN 8-LIKE PROTEIN 2"/>
    <property type="match status" value="1"/>
</dbReference>
<dbReference type="PANTHER" id="PTHR12757">
    <property type="entry name" value="TUMOR NECROSIS FACTOR INDUCED PROTEIN"/>
    <property type="match status" value="1"/>
</dbReference>
<dbReference type="Pfam" id="PF05527">
    <property type="entry name" value="DUF758"/>
    <property type="match status" value="1"/>
</dbReference>
<protein>
    <recommendedName>
        <fullName>Tumor necrosis factor, alpha-induced protein 8-like protein 2 A</fullName>
        <shortName>TIPE2 A</shortName>
        <shortName>TNF alpha-induced protein 8-like protein 2 A</shortName>
        <shortName>TNFAIP8-like protein 2 A</shortName>
    </recommendedName>
</protein>
<accession>Q1ECV8</accession>
<name>TPL2A_DANRE</name>
<feature type="chain" id="PRO_0000369397" description="Tumor necrosis factor, alpha-induced protein 8-like protein 2 A">
    <location>
        <begin position="1"/>
        <end position="186"/>
    </location>
</feature>